<accession>D9SEU0</accession>
<keyword id="KW-0010">Activator</keyword>
<keyword id="KW-1005">Bacterial flagellum biogenesis</keyword>
<keyword id="KW-0963">Cytoplasm</keyword>
<keyword id="KW-0238">DNA-binding</keyword>
<keyword id="KW-0479">Metal-binding</keyword>
<keyword id="KW-1185">Reference proteome</keyword>
<keyword id="KW-0804">Transcription</keyword>
<keyword id="KW-0805">Transcription regulation</keyword>
<keyword id="KW-0862">Zinc</keyword>
<name>FLHC_GALCS</name>
<sequence length="182" mass="20370">MAIKTVLGEAQQIKIATDLIVLGARLQVLQEETSLSRERLLKLYKEVRGESPSKGMLPYSTDWFISWQPNIHSSLFMGIYQFMIKNAGVDGVHALISAYRLYLDQVQGIEGGEVVLSITRAWFLVRFFKAGMMQLITCRECSGKFVTHTNELHNNYVCGICHPPARAGKTNAKARLLAGHAE</sequence>
<protein>
    <recommendedName>
        <fullName evidence="1">Flagellar transcriptional regulator FlhC</fullName>
    </recommendedName>
</protein>
<proteinExistence type="inferred from homology"/>
<organism>
    <name type="scientific">Gallionella capsiferriformans (strain ES-2)</name>
    <name type="common">Gallionella ferruginea capsiferriformans (strain ES-2)</name>
    <dbReference type="NCBI Taxonomy" id="395494"/>
    <lineage>
        <taxon>Bacteria</taxon>
        <taxon>Pseudomonadati</taxon>
        <taxon>Pseudomonadota</taxon>
        <taxon>Betaproteobacteria</taxon>
        <taxon>Nitrosomonadales</taxon>
        <taxon>Gallionellaceae</taxon>
        <taxon>Gallionella</taxon>
    </lineage>
</organism>
<evidence type="ECO:0000255" key="1">
    <source>
        <dbReference type="HAMAP-Rule" id="MF_01891"/>
    </source>
</evidence>
<dbReference type="EMBL" id="CP002159">
    <property type="protein sequence ID" value="ADL55037.1"/>
    <property type="molecule type" value="Genomic_DNA"/>
</dbReference>
<dbReference type="RefSeq" id="WP_013292977.1">
    <property type="nucleotide sequence ID" value="NC_014394.1"/>
</dbReference>
<dbReference type="SMR" id="D9SEU0"/>
<dbReference type="STRING" id="395494.Galf_1007"/>
<dbReference type="KEGG" id="gca:Galf_1007"/>
<dbReference type="eggNOG" id="ENOG502Z927">
    <property type="taxonomic scope" value="Bacteria"/>
</dbReference>
<dbReference type="HOGENOM" id="CLU_122824_0_0_4"/>
<dbReference type="OrthoDB" id="5570801at2"/>
<dbReference type="Proteomes" id="UP000001235">
    <property type="component" value="Chromosome"/>
</dbReference>
<dbReference type="GO" id="GO:0005737">
    <property type="term" value="C:cytoplasm"/>
    <property type="evidence" value="ECO:0007669"/>
    <property type="project" value="UniProtKB-SubCell"/>
</dbReference>
<dbReference type="GO" id="GO:0003677">
    <property type="term" value="F:DNA binding"/>
    <property type="evidence" value="ECO:0007669"/>
    <property type="project" value="UniProtKB-UniRule"/>
</dbReference>
<dbReference type="GO" id="GO:0008270">
    <property type="term" value="F:zinc ion binding"/>
    <property type="evidence" value="ECO:0007669"/>
    <property type="project" value="UniProtKB-UniRule"/>
</dbReference>
<dbReference type="GO" id="GO:0044781">
    <property type="term" value="P:bacterial-type flagellum organization"/>
    <property type="evidence" value="ECO:0007669"/>
    <property type="project" value="UniProtKB-KW"/>
</dbReference>
<dbReference type="GO" id="GO:0045893">
    <property type="term" value="P:positive regulation of DNA-templated transcription"/>
    <property type="evidence" value="ECO:0007669"/>
    <property type="project" value="InterPro"/>
</dbReference>
<dbReference type="GO" id="GO:1902208">
    <property type="term" value="P:regulation of bacterial-type flagellum assembly"/>
    <property type="evidence" value="ECO:0007669"/>
    <property type="project" value="UniProtKB-UniRule"/>
</dbReference>
<dbReference type="HAMAP" id="MF_01891">
    <property type="entry name" value="FhlC"/>
    <property type="match status" value="1"/>
</dbReference>
<dbReference type="InterPro" id="IPR007944">
    <property type="entry name" value="FlhC"/>
</dbReference>
<dbReference type="NCBIfam" id="NF009365">
    <property type="entry name" value="PRK12722.1"/>
    <property type="match status" value="1"/>
</dbReference>
<dbReference type="Pfam" id="PF05280">
    <property type="entry name" value="FlhC"/>
    <property type="match status" value="1"/>
</dbReference>
<dbReference type="PIRSF" id="PIRSF003159">
    <property type="entry name" value="FlhC"/>
    <property type="match status" value="1"/>
</dbReference>
<dbReference type="SUPFAM" id="SSF160930">
    <property type="entry name" value="FlhC-like"/>
    <property type="match status" value="1"/>
</dbReference>
<reference key="1">
    <citation type="submission" date="2010-08" db="EMBL/GenBank/DDBJ databases">
        <title>Complete sequence of Gallionella capsiferriformans ES-2.</title>
        <authorList>
            <consortium name="US DOE Joint Genome Institute"/>
            <person name="Lucas S."/>
            <person name="Copeland A."/>
            <person name="Lapidus A."/>
            <person name="Cheng J.-F."/>
            <person name="Bruce D."/>
            <person name="Goodwin L."/>
            <person name="Pitluck S."/>
            <person name="Chertkov O."/>
            <person name="Davenport K.W."/>
            <person name="Detter J.C."/>
            <person name="Han C."/>
            <person name="Tapia R."/>
            <person name="Land M."/>
            <person name="Hauser L."/>
            <person name="Chang Y.-J."/>
            <person name="Jeffries C."/>
            <person name="Kyrpides N."/>
            <person name="Ivanova N."/>
            <person name="Mikhailova N."/>
            <person name="Shelobolina E.S."/>
            <person name="Picardal F."/>
            <person name="Roden E."/>
            <person name="Emerson D."/>
            <person name="Woyke T."/>
        </authorList>
    </citation>
    <scope>NUCLEOTIDE SEQUENCE [LARGE SCALE GENOMIC DNA]</scope>
    <source>
        <strain>ES-2</strain>
    </source>
</reference>
<feature type="chain" id="PRO_0000406762" description="Flagellar transcriptional regulator FlhC">
    <location>
        <begin position="1"/>
        <end position="182"/>
    </location>
</feature>
<feature type="binding site" evidence="1">
    <location>
        <position position="138"/>
    </location>
    <ligand>
        <name>Zn(2+)</name>
        <dbReference type="ChEBI" id="CHEBI:29105"/>
    </ligand>
</feature>
<feature type="binding site" evidence="1">
    <location>
        <position position="141"/>
    </location>
    <ligand>
        <name>Zn(2+)</name>
        <dbReference type="ChEBI" id="CHEBI:29105"/>
    </ligand>
</feature>
<feature type="binding site" evidence="1">
    <location>
        <position position="158"/>
    </location>
    <ligand>
        <name>Zn(2+)</name>
        <dbReference type="ChEBI" id="CHEBI:29105"/>
    </ligand>
</feature>
<feature type="binding site" evidence="1">
    <location>
        <position position="161"/>
    </location>
    <ligand>
        <name>Zn(2+)</name>
        <dbReference type="ChEBI" id="CHEBI:29105"/>
    </ligand>
</feature>
<comment type="function">
    <text evidence="1">Functions in complex with FlhD as a master transcriptional regulator that regulates transcription of several flagellar and non-flagellar operons by binding to their promoter region. Activates expression of class 2 flagellar genes, including fliA, which is a flagellum-specific sigma factor that turns on the class 3 genes. Also regulates genes whose products function in a variety of physiological pathways.</text>
</comment>
<comment type="cofactor">
    <cofactor evidence="1">
        <name>Zn(2+)</name>
        <dbReference type="ChEBI" id="CHEBI:29105"/>
    </cofactor>
    <text evidence="1">Binds 1 zinc ion per subunit.</text>
</comment>
<comment type="subunit">
    <text evidence="1">Heterohexamer composed of two FlhC and four FlhD subunits. Each FlhC binds a FlhD dimer, forming a heterotrimer, and a hexamer assembles by dimerization of two heterotrimers.</text>
</comment>
<comment type="subcellular location">
    <subcellularLocation>
        <location evidence="1">Cytoplasm</location>
    </subcellularLocation>
</comment>
<comment type="similarity">
    <text evidence="1">Belongs to the FlhC family.</text>
</comment>
<gene>
    <name evidence="1" type="primary">flhC</name>
    <name type="ordered locus">Galf_1007</name>
</gene>